<keyword id="KW-0963">Cytoplasm</keyword>
<keyword id="KW-0664">Pyridoxine biosynthesis</keyword>
<keyword id="KW-0808">Transferase</keyword>
<accession>B2UVZ8</accession>
<dbReference type="EC" id="2.6.99.2" evidence="1"/>
<dbReference type="EMBL" id="CP001072">
    <property type="protein sequence ID" value="ACD49030.1"/>
    <property type="molecule type" value="Genomic_DNA"/>
</dbReference>
<dbReference type="RefSeq" id="WP_001210832.1">
    <property type="nucleotide sequence ID" value="NC_010698.2"/>
</dbReference>
<dbReference type="SMR" id="B2UVZ8"/>
<dbReference type="KEGG" id="hps:HPSH_08235"/>
<dbReference type="HOGENOM" id="CLU_074563_0_0_7"/>
<dbReference type="UniPathway" id="UPA00244">
    <property type="reaction ID" value="UER00313"/>
</dbReference>
<dbReference type="GO" id="GO:0005829">
    <property type="term" value="C:cytosol"/>
    <property type="evidence" value="ECO:0007669"/>
    <property type="project" value="TreeGrafter"/>
</dbReference>
<dbReference type="GO" id="GO:0033856">
    <property type="term" value="F:pyridoxine 5'-phosphate synthase activity"/>
    <property type="evidence" value="ECO:0007669"/>
    <property type="project" value="UniProtKB-EC"/>
</dbReference>
<dbReference type="GO" id="GO:0008615">
    <property type="term" value="P:pyridoxine biosynthetic process"/>
    <property type="evidence" value="ECO:0007669"/>
    <property type="project" value="UniProtKB-UniRule"/>
</dbReference>
<dbReference type="FunFam" id="3.20.20.70:FF:000264">
    <property type="entry name" value="Pyridoxine 5'-phosphate synthase"/>
    <property type="match status" value="1"/>
</dbReference>
<dbReference type="Gene3D" id="3.20.20.70">
    <property type="entry name" value="Aldolase class I"/>
    <property type="match status" value="1"/>
</dbReference>
<dbReference type="HAMAP" id="MF_00279">
    <property type="entry name" value="PdxJ"/>
    <property type="match status" value="1"/>
</dbReference>
<dbReference type="InterPro" id="IPR013785">
    <property type="entry name" value="Aldolase_TIM"/>
</dbReference>
<dbReference type="InterPro" id="IPR004569">
    <property type="entry name" value="PyrdxlP_synth_PdxJ"/>
</dbReference>
<dbReference type="InterPro" id="IPR036130">
    <property type="entry name" value="Pyridoxine-5'_phos_synth"/>
</dbReference>
<dbReference type="NCBIfam" id="TIGR00559">
    <property type="entry name" value="pdxJ"/>
    <property type="match status" value="1"/>
</dbReference>
<dbReference type="NCBIfam" id="NF003625">
    <property type="entry name" value="PRK05265.1-3"/>
    <property type="match status" value="1"/>
</dbReference>
<dbReference type="NCBIfam" id="NF003627">
    <property type="entry name" value="PRK05265.1-5"/>
    <property type="match status" value="1"/>
</dbReference>
<dbReference type="PANTHER" id="PTHR30456">
    <property type="entry name" value="PYRIDOXINE 5'-PHOSPHATE SYNTHASE"/>
    <property type="match status" value="1"/>
</dbReference>
<dbReference type="PANTHER" id="PTHR30456:SF0">
    <property type="entry name" value="PYRIDOXINE 5'-PHOSPHATE SYNTHASE"/>
    <property type="match status" value="1"/>
</dbReference>
<dbReference type="Pfam" id="PF03740">
    <property type="entry name" value="PdxJ"/>
    <property type="match status" value="1"/>
</dbReference>
<dbReference type="SUPFAM" id="SSF63892">
    <property type="entry name" value="Pyridoxine 5'-phosphate synthase"/>
    <property type="match status" value="1"/>
</dbReference>
<feature type="chain" id="PRO_1000114813" description="Pyridoxine 5'-phosphate synthase">
    <location>
        <begin position="1"/>
        <end position="262"/>
    </location>
</feature>
<feature type="active site" description="Proton acceptor" evidence="1">
    <location>
        <position position="43"/>
    </location>
</feature>
<feature type="active site" description="Proton acceptor" evidence="1">
    <location>
        <position position="70"/>
    </location>
</feature>
<feature type="active site" description="Proton donor" evidence="1">
    <location>
        <position position="215"/>
    </location>
</feature>
<feature type="binding site" evidence="1">
    <location>
        <position position="6"/>
    </location>
    <ligand>
        <name>3-amino-2-oxopropyl phosphate</name>
        <dbReference type="ChEBI" id="CHEBI:57279"/>
    </ligand>
</feature>
<feature type="binding site" evidence="1">
    <location>
        <begin position="8"/>
        <end position="9"/>
    </location>
    <ligand>
        <name>1-deoxy-D-xylulose 5-phosphate</name>
        <dbReference type="ChEBI" id="CHEBI:57792"/>
    </ligand>
</feature>
<feature type="binding site" evidence="1">
    <location>
        <position position="17"/>
    </location>
    <ligand>
        <name>3-amino-2-oxopropyl phosphate</name>
        <dbReference type="ChEBI" id="CHEBI:57279"/>
    </ligand>
</feature>
<feature type="binding site" evidence="1">
    <location>
        <position position="45"/>
    </location>
    <ligand>
        <name>1-deoxy-D-xylulose 5-phosphate</name>
        <dbReference type="ChEBI" id="CHEBI:57792"/>
    </ligand>
</feature>
<feature type="binding site" evidence="1">
    <location>
        <position position="50"/>
    </location>
    <ligand>
        <name>1-deoxy-D-xylulose 5-phosphate</name>
        <dbReference type="ChEBI" id="CHEBI:57792"/>
    </ligand>
</feature>
<feature type="binding site" evidence="1">
    <location>
        <position position="102"/>
    </location>
    <ligand>
        <name>1-deoxy-D-xylulose 5-phosphate</name>
        <dbReference type="ChEBI" id="CHEBI:57792"/>
    </ligand>
</feature>
<feature type="binding site" evidence="1">
    <location>
        <position position="216"/>
    </location>
    <ligand>
        <name>3-amino-2-oxopropyl phosphate</name>
        <dbReference type="ChEBI" id="CHEBI:57279"/>
    </ligand>
</feature>
<feature type="binding site" evidence="1">
    <location>
        <begin position="237"/>
        <end position="238"/>
    </location>
    <ligand>
        <name>3-amino-2-oxopropyl phosphate</name>
        <dbReference type="ChEBI" id="CHEBI:57279"/>
    </ligand>
</feature>
<feature type="site" description="Transition state stabilizer" evidence="1">
    <location>
        <position position="151"/>
    </location>
</feature>
<sequence length="262" mass="29578">MRFGLNIDHIVTLREIRKTYEPEILEALFIAKNTHKVDLITIHLREDKRHIQNEDVLRLLEISPLPINIECSINAGITDFLCSLKNKPSKVTIVPENRNEVTTEGGLDCSLKGLGEVIRAYHNKGVEVSLFIDPLKDALHFAREHQVKQVEFHTGVYANLHNALYSNANNQIHAISALKDKSPKELKEELHNAFLQLRKMSKEAFFMGITACAGHGLNYSNVKELLKIPSLRELNIGHSVISKAVLVGLEKAILEMAQLIKR</sequence>
<comment type="function">
    <text evidence="1">Catalyzes the complicated ring closure reaction between the two acyclic compounds 1-deoxy-D-xylulose-5-phosphate (DXP) and 3-amino-2-oxopropyl phosphate (1-amino-acetone-3-phosphate or AAP) to form pyridoxine 5'-phosphate (PNP) and inorganic phosphate.</text>
</comment>
<comment type="catalytic activity">
    <reaction evidence="1">
        <text>3-amino-2-oxopropyl phosphate + 1-deoxy-D-xylulose 5-phosphate = pyridoxine 5'-phosphate + phosphate + 2 H2O + H(+)</text>
        <dbReference type="Rhea" id="RHEA:15265"/>
        <dbReference type="ChEBI" id="CHEBI:15377"/>
        <dbReference type="ChEBI" id="CHEBI:15378"/>
        <dbReference type="ChEBI" id="CHEBI:43474"/>
        <dbReference type="ChEBI" id="CHEBI:57279"/>
        <dbReference type="ChEBI" id="CHEBI:57792"/>
        <dbReference type="ChEBI" id="CHEBI:58589"/>
        <dbReference type="EC" id="2.6.99.2"/>
    </reaction>
</comment>
<comment type="pathway">
    <text evidence="1">Cofactor biosynthesis; pyridoxine 5'-phosphate biosynthesis; pyridoxine 5'-phosphate from D-erythrose 4-phosphate: step 5/5.</text>
</comment>
<comment type="subunit">
    <text evidence="1">Homooctamer; tetramer of dimers.</text>
</comment>
<comment type="subcellular location">
    <subcellularLocation>
        <location evidence="1">Cytoplasm</location>
    </subcellularLocation>
</comment>
<comment type="similarity">
    <text evidence="1">Belongs to the PNP synthase family.</text>
</comment>
<protein>
    <recommendedName>
        <fullName evidence="1">Pyridoxine 5'-phosphate synthase</fullName>
        <shortName evidence="1">PNP synthase</shortName>
        <ecNumber evidence="1">2.6.99.2</ecNumber>
    </recommendedName>
</protein>
<reference key="1">
    <citation type="submission" date="2008-05" db="EMBL/GenBank/DDBJ databases">
        <title>Genome sequence of Helicobacter pylori from the remote Amazon: traces of Asian ancestry of the first Americans.</title>
        <authorList>
            <person name="Kersulyte D."/>
            <person name="Kalia A."/>
            <person name="Gilman R.H."/>
            <person name="Berg D.E."/>
        </authorList>
    </citation>
    <scope>NUCLEOTIDE SEQUENCE [LARGE SCALE GENOMIC DNA]</scope>
    <source>
        <strain>Shi470</strain>
    </source>
</reference>
<gene>
    <name evidence="1" type="primary">pdxJ</name>
    <name type="ordered locus">HPSH_08235</name>
</gene>
<name>PDXJ_HELPS</name>
<proteinExistence type="inferred from homology"/>
<evidence type="ECO:0000255" key="1">
    <source>
        <dbReference type="HAMAP-Rule" id="MF_00279"/>
    </source>
</evidence>
<organism>
    <name type="scientific">Helicobacter pylori (strain Shi470)</name>
    <dbReference type="NCBI Taxonomy" id="512562"/>
    <lineage>
        <taxon>Bacteria</taxon>
        <taxon>Pseudomonadati</taxon>
        <taxon>Campylobacterota</taxon>
        <taxon>Epsilonproteobacteria</taxon>
        <taxon>Campylobacterales</taxon>
        <taxon>Helicobacteraceae</taxon>
        <taxon>Helicobacter</taxon>
    </lineage>
</organism>